<feature type="chain" id="PRO_0000097581" description="Switch-activating protein 1">
    <location>
        <begin position="1"/>
        <end position="254"/>
    </location>
</feature>
<feature type="repeat" description="1">
    <location>
        <begin position="221"/>
        <end position="224"/>
    </location>
</feature>
<feature type="repeat" description="2">
    <location>
        <begin position="225"/>
        <end position="228"/>
    </location>
</feature>
<feature type="repeat" description="3">
    <location>
        <begin position="229"/>
        <end position="232"/>
    </location>
</feature>
<feature type="repeat" description="4">
    <location>
        <begin position="233"/>
        <end position="236"/>
    </location>
</feature>
<feature type="region of interest" description="Disordered" evidence="1">
    <location>
        <begin position="1"/>
        <end position="30"/>
    </location>
</feature>
<feature type="region of interest" description="4 X 4 AA tandem repeats of G-[ATV]-N-M">
    <location>
        <begin position="221"/>
        <end position="236"/>
    </location>
</feature>
<feature type="compositionally biased region" description="Basic and acidic residues" evidence="1">
    <location>
        <begin position="1"/>
        <end position="10"/>
    </location>
</feature>
<feature type="compositionally biased region" description="Low complexity" evidence="1">
    <location>
        <begin position="16"/>
        <end position="25"/>
    </location>
</feature>
<feature type="modified residue" description="Phosphoserine" evidence="4">
    <location>
        <position position="17"/>
    </location>
</feature>
<feature type="modified residue" description="Phosphoserine" evidence="4">
    <location>
        <position position="19"/>
    </location>
</feature>
<feature type="helix" evidence="5">
    <location>
        <begin position="34"/>
        <end position="46"/>
    </location>
</feature>
<feature type="helix" evidence="5">
    <location>
        <begin position="48"/>
        <end position="50"/>
    </location>
</feature>
<feature type="helix" evidence="5">
    <location>
        <begin position="56"/>
        <end position="71"/>
    </location>
</feature>
<feature type="helix" evidence="5">
    <location>
        <begin position="78"/>
        <end position="98"/>
    </location>
</feature>
<feature type="helix" evidence="5">
    <location>
        <begin position="107"/>
        <end position="131"/>
    </location>
</feature>
<organism>
    <name type="scientific">Schizosaccharomyces pombe (strain 972 / ATCC 24843)</name>
    <name type="common">Fission yeast</name>
    <dbReference type="NCBI Taxonomy" id="284812"/>
    <lineage>
        <taxon>Eukaryota</taxon>
        <taxon>Fungi</taxon>
        <taxon>Dikarya</taxon>
        <taxon>Ascomycota</taxon>
        <taxon>Taphrinomycotina</taxon>
        <taxon>Schizosaccharomycetes</taxon>
        <taxon>Schizosaccharomycetales</taxon>
        <taxon>Schizosaccharomycetaceae</taxon>
        <taxon>Schizosaccharomyces</taxon>
    </lineage>
</organism>
<name>SAP1_SCHPO</name>
<comment type="function">
    <text>Binds to sequences required for mating-type switching. Makes a simultaneous contact with both the alpha and beta domains of the switch-activating site SAS1. Also binds to replication fork barrier 1 (RFB1) located within a 78 base pair sequence near the 3' end of the rRNA coding region. This leads to replication fork blockage. It binds the consensus sequence 5'-TA[AG]GCAGNTN[CT]AACG[AC]G-3'.</text>
</comment>
<comment type="function">
    <text>Has a role in chromosome organization and integrity where it is involved in chromosome segregation. Has a role in sister chromatid cohesion and condensation.</text>
</comment>
<comment type="subunit">
    <text evidence="2">Homodimer.</text>
</comment>
<comment type="subcellular location">
    <subcellularLocation>
        <location evidence="2 3">Nucleus</location>
    </subcellularLocation>
</comment>
<comment type="domain">
    <text>The N-terminus may contain the DNA-binding domain. Last 40 residues of the C-terminus are required for chromosome segregation.</text>
</comment>
<comment type="miscellaneous">
    <text evidence="2">Present with 20000 molecules/cell in log phase SD medium.</text>
</comment>
<gene>
    <name type="primary">sap1</name>
    <name type="ORF">SPCC1672.02c</name>
</gene>
<proteinExistence type="evidence at protein level"/>
<accession>P40847</accession>
<accession>P78961</accession>
<evidence type="ECO:0000256" key="1">
    <source>
        <dbReference type="SAM" id="MobiDB-lite"/>
    </source>
</evidence>
<evidence type="ECO:0000269" key="2">
    <source>
    </source>
</evidence>
<evidence type="ECO:0000269" key="3">
    <source>
    </source>
</evidence>
<evidence type="ECO:0000269" key="4">
    <source>
    </source>
</evidence>
<evidence type="ECO:0007829" key="5">
    <source>
        <dbReference type="PDB" id="5JDK"/>
    </source>
</evidence>
<dbReference type="EMBL" id="X77578">
    <property type="protein sequence ID" value="CAA54684.1"/>
    <property type="molecule type" value="Genomic_DNA"/>
</dbReference>
<dbReference type="EMBL" id="CU329672">
    <property type="protein sequence ID" value="CAA20440.1"/>
    <property type="molecule type" value="Genomic_DNA"/>
</dbReference>
<dbReference type="PIR" id="A56214">
    <property type="entry name" value="A56214"/>
</dbReference>
<dbReference type="PIR" id="T45515">
    <property type="entry name" value="T45515"/>
</dbReference>
<dbReference type="RefSeq" id="NP_587873.1">
    <property type="nucleotide sequence ID" value="NM_001022865.2"/>
</dbReference>
<dbReference type="PDB" id="5B7J">
    <property type="method" value="NMR"/>
    <property type="chains" value="A=25-135"/>
</dbReference>
<dbReference type="PDB" id="5JDK">
    <property type="method" value="X-ray"/>
    <property type="resolution" value="1.00 A"/>
    <property type="chains" value="A=1-135"/>
</dbReference>
<dbReference type="PDB" id="6EXT">
    <property type="method" value="X-ray"/>
    <property type="resolution" value="1.50 A"/>
    <property type="chains" value="A=18-133"/>
</dbReference>
<dbReference type="PDB" id="6EXU">
    <property type="method" value="X-ray"/>
    <property type="resolution" value="1.41 A"/>
    <property type="chains" value="A=18-133"/>
</dbReference>
<dbReference type="PDBsum" id="5B7J"/>
<dbReference type="PDBsum" id="5JDK"/>
<dbReference type="PDBsum" id="6EXT"/>
<dbReference type="PDBsum" id="6EXU"/>
<dbReference type="SMR" id="P40847"/>
<dbReference type="BioGRID" id="275853">
    <property type="interactions" value="21"/>
</dbReference>
<dbReference type="STRING" id="284812.P40847"/>
<dbReference type="iPTMnet" id="P40847"/>
<dbReference type="PaxDb" id="4896-SPCC1672.02c.1"/>
<dbReference type="EnsemblFungi" id="SPCC1672.02c.1">
    <property type="protein sequence ID" value="SPCC1672.02c.1:pep"/>
    <property type="gene ID" value="SPCC1672.02c"/>
</dbReference>
<dbReference type="GeneID" id="2539285"/>
<dbReference type="KEGG" id="spo:2539285"/>
<dbReference type="PomBase" id="SPCC1672.02c">
    <property type="gene designation" value="sap1"/>
</dbReference>
<dbReference type="VEuPathDB" id="FungiDB:SPCC1672.02c"/>
<dbReference type="HOGENOM" id="CLU_1050352_0_0_1"/>
<dbReference type="InParanoid" id="P40847"/>
<dbReference type="OMA" id="IHTESAC"/>
<dbReference type="PRO" id="PR:P40847"/>
<dbReference type="Proteomes" id="UP000002485">
    <property type="component" value="Chromosome III"/>
</dbReference>
<dbReference type="GO" id="GO:0000785">
    <property type="term" value="C:chromatin"/>
    <property type="evidence" value="ECO:0000314"/>
    <property type="project" value="PomBase"/>
</dbReference>
<dbReference type="GO" id="GO:0005634">
    <property type="term" value="C:nucleus"/>
    <property type="evidence" value="ECO:0007005"/>
    <property type="project" value="PomBase"/>
</dbReference>
<dbReference type="GO" id="GO:0003677">
    <property type="term" value="F:DNA binding"/>
    <property type="evidence" value="ECO:0000314"/>
    <property type="project" value="PomBase"/>
</dbReference>
<dbReference type="GO" id="GO:0008301">
    <property type="term" value="F:DNA binding, bending"/>
    <property type="evidence" value="ECO:0000314"/>
    <property type="project" value="PomBase"/>
</dbReference>
<dbReference type="GO" id="GO:0043110">
    <property type="term" value="F:rDNA spacer replication fork barrier binding"/>
    <property type="evidence" value="ECO:0000314"/>
    <property type="project" value="PomBase"/>
</dbReference>
<dbReference type="GO" id="GO:0043565">
    <property type="term" value="F:sequence-specific DNA binding"/>
    <property type="evidence" value="ECO:0000314"/>
    <property type="project" value="PomBase"/>
</dbReference>
<dbReference type="GO" id="GO:1990837">
    <property type="term" value="F:sequence-specific double-stranded DNA binding"/>
    <property type="evidence" value="ECO:0000314"/>
    <property type="project" value="PomBase"/>
</dbReference>
<dbReference type="GO" id="GO:0007059">
    <property type="term" value="P:chromosome segregation"/>
    <property type="evidence" value="ECO:0007669"/>
    <property type="project" value="UniProtKB-KW"/>
</dbReference>
<dbReference type="GO" id="GO:0007534">
    <property type="term" value="P:gene conversion at mating-type locus"/>
    <property type="evidence" value="ECO:0000315"/>
    <property type="project" value="PomBase"/>
</dbReference>
<dbReference type="GO" id="GO:1902985">
    <property type="term" value="P:mitotic pre-replicative complex assembly"/>
    <property type="evidence" value="ECO:0000315"/>
    <property type="project" value="CACAO"/>
</dbReference>
<dbReference type="GO" id="GO:0031582">
    <property type="term" value="P:replication fork arrest at rDNA repeats"/>
    <property type="evidence" value="ECO:0000314"/>
    <property type="project" value="PomBase"/>
</dbReference>
<dbReference type="GO" id="GO:0071170">
    <property type="term" value="P:site-specific DNA replication termination"/>
    <property type="evidence" value="ECO:0000314"/>
    <property type="project" value="PomBase"/>
</dbReference>
<dbReference type="InterPro" id="IPR048592">
    <property type="entry name" value="Sap1_N"/>
</dbReference>
<dbReference type="Pfam" id="PF21438">
    <property type="entry name" value="Sap1_N"/>
    <property type="match status" value="1"/>
</dbReference>
<reference key="1">
    <citation type="journal article" date="1994" name="Mol. Cell. Biol.">
        <title>Sap1, a protein that binds to sequences required for mating-type switching, is essential for viability in Schizosaccharomyces pombe.</title>
        <authorList>
            <person name="Arcangioli B."/>
            <person name="Copeland T.D."/>
            <person name="Klar A.J.S."/>
        </authorList>
    </citation>
    <scope>NUCLEOTIDE SEQUENCE [GENOMIC DNA]</scope>
    <scope>PROTEIN SEQUENCE OF 90-102; 163-179 AND 189-208</scope>
    <scope>FUNCTION</scope>
</reference>
<reference key="2">
    <citation type="journal article" date="2002" name="Nature">
        <title>The genome sequence of Schizosaccharomyces pombe.</title>
        <authorList>
            <person name="Wood V."/>
            <person name="Gwilliam R."/>
            <person name="Rajandream M.A."/>
            <person name="Lyne M.H."/>
            <person name="Lyne R."/>
            <person name="Stewart A."/>
            <person name="Sgouros J.G."/>
            <person name="Peat N."/>
            <person name="Hayles J."/>
            <person name="Baker S.G."/>
            <person name="Basham D."/>
            <person name="Bowman S."/>
            <person name="Brooks K."/>
            <person name="Brown D."/>
            <person name="Brown S."/>
            <person name="Chillingworth T."/>
            <person name="Churcher C.M."/>
            <person name="Collins M."/>
            <person name="Connor R."/>
            <person name="Cronin A."/>
            <person name="Davis P."/>
            <person name="Feltwell T."/>
            <person name="Fraser A."/>
            <person name="Gentles S."/>
            <person name="Goble A."/>
            <person name="Hamlin N."/>
            <person name="Harris D.E."/>
            <person name="Hidalgo J."/>
            <person name="Hodgson G."/>
            <person name="Holroyd S."/>
            <person name="Hornsby T."/>
            <person name="Howarth S."/>
            <person name="Huckle E.J."/>
            <person name="Hunt S."/>
            <person name="Jagels K."/>
            <person name="James K.D."/>
            <person name="Jones L."/>
            <person name="Jones M."/>
            <person name="Leather S."/>
            <person name="McDonald S."/>
            <person name="McLean J."/>
            <person name="Mooney P."/>
            <person name="Moule S."/>
            <person name="Mungall K.L."/>
            <person name="Murphy L.D."/>
            <person name="Niblett D."/>
            <person name="Odell C."/>
            <person name="Oliver K."/>
            <person name="O'Neil S."/>
            <person name="Pearson D."/>
            <person name="Quail M.A."/>
            <person name="Rabbinowitsch E."/>
            <person name="Rutherford K.M."/>
            <person name="Rutter S."/>
            <person name="Saunders D."/>
            <person name="Seeger K."/>
            <person name="Sharp S."/>
            <person name="Skelton J."/>
            <person name="Simmonds M.N."/>
            <person name="Squares R."/>
            <person name="Squares S."/>
            <person name="Stevens K."/>
            <person name="Taylor K."/>
            <person name="Taylor R.G."/>
            <person name="Tivey A."/>
            <person name="Walsh S.V."/>
            <person name="Warren T."/>
            <person name="Whitehead S."/>
            <person name="Woodward J.R."/>
            <person name="Volckaert G."/>
            <person name="Aert R."/>
            <person name="Robben J."/>
            <person name="Grymonprez B."/>
            <person name="Weltjens I."/>
            <person name="Vanstreels E."/>
            <person name="Rieger M."/>
            <person name="Schaefer M."/>
            <person name="Mueller-Auer S."/>
            <person name="Gabel C."/>
            <person name="Fuchs M."/>
            <person name="Duesterhoeft A."/>
            <person name="Fritzc C."/>
            <person name="Holzer E."/>
            <person name="Moestl D."/>
            <person name="Hilbert H."/>
            <person name="Borzym K."/>
            <person name="Langer I."/>
            <person name="Beck A."/>
            <person name="Lehrach H."/>
            <person name="Reinhardt R."/>
            <person name="Pohl T.M."/>
            <person name="Eger P."/>
            <person name="Zimmermann W."/>
            <person name="Wedler H."/>
            <person name="Wambutt R."/>
            <person name="Purnelle B."/>
            <person name="Goffeau A."/>
            <person name="Cadieu E."/>
            <person name="Dreano S."/>
            <person name="Gloux S."/>
            <person name="Lelaure V."/>
            <person name="Mottier S."/>
            <person name="Galibert F."/>
            <person name="Aves S.J."/>
            <person name="Xiang Z."/>
            <person name="Hunt C."/>
            <person name="Moore K."/>
            <person name="Hurst S.M."/>
            <person name="Lucas M."/>
            <person name="Rochet M."/>
            <person name="Gaillardin C."/>
            <person name="Tallada V.A."/>
            <person name="Garzon A."/>
            <person name="Thode G."/>
            <person name="Daga R.R."/>
            <person name="Cruzado L."/>
            <person name="Jimenez J."/>
            <person name="Sanchez M."/>
            <person name="del Rey F."/>
            <person name="Benito J."/>
            <person name="Dominguez A."/>
            <person name="Revuelta J.L."/>
            <person name="Moreno S."/>
            <person name="Armstrong J."/>
            <person name="Forsburg S.L."/>
            <person name="Cerutti L."/>
            <person name="Lowe T."/>
            <person name="McCombie W.R."/>
            <person name="Paulsen I."/>
            <person name="Potashkin J."/>
            <person name="Shpakovski G.V."/>
            <person name="Ussery D."/>
            <person name="Barrell B.G."/>
            <person name="Nurse P."/>
        </authorList>
    </citation>
    <scope>NUCLEOTIDE SEQUENCE [LARGE SCALE GENOMIC DNA]</scope>
    <source>
        <strain>972 / ATCC 24843</strain>
    </source>
</reference>
<reference key="3">
    <citation type="journal article" date="2003" name="Eukaryot. Cell">
        <title>Fission yeast Sap1 protein is essential for chromosome stability.</title>
        <authorList>
            <person name="de Lahondes R."/>
            <person name="Ribes V."/>
            <person name="Arcangioli B."/>
        </authorList>
    </citation>
    <scope>FUNCTION</scope>
    <scope>SUBUNIT</scope>
    <scope>SUBCELLULAR LOCATION</scope>
    <scope>LEVEL OF PROTEIN EXPRESSION</scope>
</reference>
<reference key="4">
    <citation type="journal article" date="2005" name="Mol. Cell. Biol.">
        <title>The mating type switch-activating protein Sap1 Is required for replication fork arrest at the rRNA genes of fission yeast.</title>
        <authorList>
            <person name="Mejia-Ramirez E."/>
            <person name="Sanchez-Gorostiaga A."/>
            <person name="Krimer D.B."/>
            <person name="Schvartzman J.B."/>
            <person name="Hernandez P."/>
        </authorList>
    </citation>
    <scope>FUNCTION</scope>
</reference>
<reference key="5">
    <citation type="journal article" date="2006" name="Nat. Biotechnol.">
        <title>ORFeome cloning and global analysis of protein localization in the fission yeast Schizosaccharomyces pombe.</title>
        <authorList>
            <person name="Matsuyama A."/>
            <person name="Arai R."/>
            <person name="Yashiroda Y."/>
            <person name="Shirai A."/>
            <person name="Kamata A."/>
            <person name="Sekido S."/>
            <person name="Kobayashi Y."/>
            <person name="Hashimoto A."/>
            <person name="Hamamoto M."/>
            <person name="Hiraoka Y."/>
            <person name="Horinouchi S."/>
            <person name="Yoshida M."/>
        </authorList>
    </citation>
    <scope>SUBCELLULAR LOCATION [LARGE SCALE ANALYSIS]</scope>
</reference>
<reference key="6">
    <citation type="journal article" date="2008" name="J. Proteome Res.">
        <title>Phosphoproteome analysis of fission yeast.</title>
        <authorList>
            <person name="Wilson-Grady J.T."/>
            <person name="Villen J."/>
            <person name="Gygi S.P."/>
        </authorList>
    </citation>
    <scope>PHOSPHORYLATION [LARGE SCALE ANALYSIS] AT SER-17 AND SER-19</scope>
    <scope>IDENTIFICATION BY MASS SPECTROMETRY</scope>
</reference>
<sequence length="254" mass="29127">MEAPKMELKSYKRKNASLSPSSSPAKAQRTHLSLEEKIKLMRLVVRHKHELVDRKTSEFYAKIARIGYEDEGLAIHTESACRNQIISIMRVYEQRLAHRQPGMKTTPEEDELDQLCDEWKARLSELQQYREKFLVGKRKCDCNDEINERLKKLTEEQQNVDMLVAKVNFLSKHLHDNEEKLMQVNAKMDEVLAENKRLQQLLDHNDLLSKLEPPSAYAPHGVNMGTNMGANMGANMNAIRGGLHSSISPNLGDH</sequence>
<protein>
    <recommendedName>
        <fullName>Switch-activating protein 1</fullName>
    </recommendedName>
</protein>
<keyword id="KW-0002">3D-structure</keyword>
<keyword id="KW-0159">Chromosome partition</keyword>
<keyword id="KW-0903">Direct protein sequencing</keyword>
<keyword id="KW-0238">DNA-binding</keyword>
<keyword id="KW-0539">Nucleus</keyword>
<keyword id="KW-0597">Phosphoprotein</keyword>
<keyword id="KW-1185">Reference proteome</keyword>
<keyword id="KW-0677">Repeat</keyword>